<evidence type="ECO:0000255" key="1">
    <source>
        <dbReference type="HAMAP-Rule" id="MF_00731"/>
    </source>
</evidence>
<comment type="function">
    <text evidence="1">Converts 2-succinylbenzoate (OSB) to 2-succinylbenzoyl-CoA (OSB-CoA).</text>
</comment>
<comment type="catalytic activity">
    <reaction evidence="1">
        <text>2-succinylbenzoate + ATP + CoA = 2-succinylbenzoyl-CoA + AMP + diphosphate</text>
        <dbReference type="Rhea" id="RHEA:17009"/>
        <dbReference type="ChEBI" id="CHEBI:18325"/>
        <dbReference type="ChEBI" id="CHEBI:30616"/>
        <dbReference type="ChEBI" id="CHEBI:33019"/>
        <dbReference type="ChEBI" id="CHEBI:57287"/>
        <dbReference type="ChEBI" id="CHEBI:57364"/>
        <dbReference type="ChEBI" id="CHEBI:456215"/>
        <dbReference type="EC" id="6.2.1.26"/>
    </reaction>
</comment>
<comment type="pathway">
    <text evidence="1">Quinol/quinone metabolism; 1,4-dihydroxy-2-naphthoate biosynthesis; 1,4-dihydroxy-2-naphthoate from chorismate: step 5/7.</text>
</comment>
<comment type="pathway">
    <text evidence="1">Quinol/quinone metabolism; menaquinone biosynthesis.</text>
</comment>
<comment type="similarity">
    <text evidence="1">Belongs to the ATP-dependent AMP-binding enzyme family. MenE subfamily.</text>
</comment>
<accession>A7GU88</accession>
<dbReference type="EC" id="6.2.1.26" evidence="1"/>
<dbReference type="EMBL" id="CP000764">
    <property type="protein sequence ID" value="ABS23696.1"/>
    <property type="molecule type" value="Genomic_DNA"/>
</dbReference>
<dbReference type="RefSeq" id="WP_012095944.1">
    <property type="nucleotide sequence ID" value="NC_009674.1"/>
</dbReference>
<dbReference type="SMR" id="A7GU88"/>
<dbReference type="STRING" id="315749.Bcer98_3490"/>
<dbReference type="GeneID" id="33898721"/>
<dbReference type="KEGG" id="bcy:Bcer98_3490"/>
<dbReference type="eggNOG" id="COG0318">
    <property type="taxonomic scope" value="Bacteria"/>
</dbReference>
<dbReference type="HOGENOM" id="CLU_000022_59_0_9"/>
<dbReference type="OrthoDB" id="9762242at2"/>
<dbReference type="UniPathway" id="UPA00079"/>
<dbReference type="UniPathway" id="UPA01057">
    <property type="reaction ID" value="UER00166"/>
</dbReference>
<dbReference type="Proteomes" id="UP000002300">
    <property type="component" value="Chromosome"/>
</dbReference>
<dbReference type="GO" id="GO:0005524">
    <property type="term" value="F:ATP binding"/>
    <property type="evidence" value="ECO:0007669"/>
    <property type="project" value="UniProtKB-KW"/>
</dbReference>
<dbReference type="GO" id="GO:0008756">
    <property type="term" value="F:o-succinylbenzoate-CoA ligase activity"/>
    <property type="evidence" value="ECO:0007669"/>
    <property type="project" value="UniProtKB-UniRule"/>
</dbReference>
<dbReference type="GO" id="GO:0009234">
    <property type="term" value="P:menaquinone biosynthetic process"/>
    <property type="evidence" value="ECO:0007669"/>
    <property type="project" value="UniProtKB-UniRule"/>
</dbReference>
<dbReference type="CDD" id="cd05912">
    <property type="entry name" value="OSB_CoA_lg"/>
    <property type="match status" value="1"/>
</dbReference>
<dbReference type="FunFam" id="3.30.300.30:FF:000008">
    <property type="entry name" value="2,3-dihydroxybenzoate-AMP ligase"/>
    <property type="match status" value="1"/>
</dbReference>
<dbReference type="Gene3D" id="3.30.300.30">
    <property type="match status" value="1"/>
</dbReference>
<dbReference type="Gene3D" id="3.40.50.12780">
    <property type="entry name" value="N-terminal domain of ligase-like"/>
    <property type="match status" value="1"/>
</dbReference>
<dbReference type="HAMAP" id="MF_00731">
    <property type="entry name" value="MenE"/>
    <property type="match status" value="1"/>
</dbReference>
<dbReference type="InterPro" id="IPR025110">
    <property type="entry name" value="AMP-bd_C"/>
</dbReference>
<dbReference type="InterPro" id="IPR045851">
    <property type="entry name" value="AMP-bd_C_sf"/>
</dbReference>
<dbReference type="InterPro" id="IPR020845">
    <property type="entry name" value="AMP-binding_CS"/>
</dbReference>
<dbReference type="InterPro" id="IPR000873">
    <property type="entry name" value="AMP-dep_synth/lig_dom"/>
</dbReference>
<dbReference type="InterPro" id="IPR042099">
    <property type="entry name" value="ANL_N_sf"/>
</dbReference>
<dbReference type="InterPro" id="IPR010192">
    <property type="entry name" value="MenE"/>
</dbReference>
<dbReference type="NCBIfam" id="TIGR01923">
    <property type="entry name" value="menE"/>
    <property type="match status" value="1"/>
</dbReference>
<dbReference type="NCBIfam" id="NF002966">
    <property type="entry name" value="PRK03640.1"/>
    <property type="match status" value="1"/>
</dbReference>
<dbReference type="PANTHER" id="PTHR24096:SF149">
    <property type="entry name" value="AMP-BINDING DOMAIN-CONTAINING PROTEIN-RELATED"/>
    <property type="match status" value="1"/>
</dbReference>
<dbReference type="PANTHER" id="PTHR24096">
    <property type="entry name" value="LONG-CHAIN-FATTY-ACID--COA LIGASE"/>
    <property type="match status" value="1"/>
</dbReference>
<dbReference type="Pfam" id="PF00501">
    <property type="entry name" value="AMP-binding"/>
    <property type="match status" value="1"/>
</dbReference>
<dbReference type="Pfam" id="PF13193">
    <property type="entry name" value="AMP-binding_C"/>
    <property type="match status" value="1"/>
</dbReference>
<dbReference type="SUPFAM" id="SSF56801">
    <property type="entry name" value="Acetyl-CoA synthetase-like"/>
    <property type="match status" value="1"/>
</dbReference>
<dbReference type="PROSITE" id="PS00455">
    <property type="entry name" value="AMP_BINDING"/>
    <property type="match status" value="1"/>
</dbReference>
<proteinExistence type="inferred from homology"/>
<organism>
    <name type="scientific">Bacillus cytotoxicus (strain DSM 22905 / CIP 110041 / 391-98 / NVH 391-98)</name>
    <dbReference type="NCBI Taxonomy" id="315749"/>
    <lineage>
        <taxon>Bacteria</taxon>
        <taxon>Bacillati</taxon>
        <taxon>Bacillota</taxon>
        <taxon>Bacilli</taxon>
        <taxon>Bacillales</taxon>
        <taxon>Bacillaceae</taxon>
        <taxon>Bacillus</taxon>
        <taxon>Bacillus cereus group</taxon>
    </lineage>
</organism>
<feature type="chain" id="PRO_1000083334" description="2-succinylbenzoate--CoA ligase">
    <location>
        <begin position="1"/>
        <end position="481"/>
    </location>
</feature>
<name>MENE_BACCN</name>
<keyword id="KW-0067">ATP-binding</keyword>
<keyword id="KW-0436">Ligase</keyword>
<keyword id="KW-0474">Menaquinone biosynthesis</keyword>
<keyword id="KW-0547">Nucleotide-binding</keyword>
<sequence length="481" mass="53772">METMPNWLMQRAFLTPDRIAIETKEEKITFFALHEKVVSVCENLAYLQIKKGQKVAVLMKNGMEMIAVIHALSYIGAIAVLLNTRLSREELLWQMEDAEVICLLTDQIFEPEQVPVYTFEEVENGPKQSVVIQEEFSLAEAMTIIYTSGTTGKPKGVILTYGNHWASAVGSSLNLGLRDDDCWLACMPMFHVGGLSLLMKNIMYGMRVLLVPKYDPDFIHQAIQTKGVTIISVVAKMLTDLLERLGNETYPSSLRCMLLGGGPAPKPLLEACVQKGIPVYQTYGMTETSSQICTLSADYMLTKVGSAGKPLFPCQLRIEKDGKVMPANVEGEIVVKGPNVTRGYFKREDATRETIVDGWLHTGDLGYVDDEGFLYVLDRRSDLIISGGENIYPAQIEEVLLSHPLVLEAGVVGKSDETWGQVPVAFVVKAGQVTEEEMIHFCEEKLAKYKVPKAVYFLHELPRNASKKLLRRELRQLLEEK</sequence>
<reference key="1">
    <citation type="journal article" date="2008" name="Chem. Biol. Interact.">
        <title>Extending the Bacillus cereus group genomics to putative food-borne pathogens of different toxicity.</title>
        <authorList>
            <person name="Lapidus A."/>
            <person name="Goltsman E."/>
            <person name="Auger S."/>
            <person name="Galleron N."/>
            <person name="Segurens B."/>
            <person name="Dossat C."/>
            <person name="Land M.L."/>
            <person name="Broussolle V."/>
            <person name="Brillard J."/>
            <person name="Guinebretiere M.-H."/>
            <person name="Sanchis V."/>
            <person name="Nguen-the C."/>
            <person name="Lereclus D."/>
            <person name="Richardson P."/>
            <person name="Wincker P."/>
            <person name="Weissenbach J."/>
            <person name="Ehrlich S.D."/>
            <person name="Sorokin A."/>
        </authorList>
    </citation>
    <scope>NUCLEOTIDE SEQUENCE [LARGE SCALE GENOMIC DNA]</scope>
    <source>
        <strain>DSM 22905 / CIP 110041 / 391-98 / NVH 391-98</strain>
    </source>
</reference>
<protein>
    <recommendedName>
        <fullName evidence="1">2-succinylbenzoate--CoA ligase</fullName>
        <ecNumber evidence="1">6.2.1.26</ecNumber>
    </recommendedName>
    <alternativeName>
        <fullName evidence="1">o-succinylbenzoyl-CoA synthetase</fullName>
        <shortName evidence="1">OSB-CoA synthetase</shortName>
    </alternativeName>
</protein>
<gene>
    <name evidence="1" type="primary">menE</name>
    <name type="ordered locus">Bcer98_3490</name>
</gene>